<organism>
    <name type="scientific">Saccharomyces cerevisiae (strain ATCC 204508 / S288c)</name>
    <name type="common">Baker's yeast</name>
    <dbReference type="NCBI Taxonomy" id="559292"/>
    <lineage>
        <taxon>Eukaryota</taxon>
        <taxon>Fungi</taxon>
        <taxon>Dikarya</taxon>
        <taxon>Ascomycota</taxon>
        <taxon>Saccharomycotina</taxon>
        <taxon>Saccharomycetes</taxon>
        <taxon>Saccharomycetales</taxon>
        <taxon>Saccharomycetaceae</taxon>
        <taxon>Saccharomyces</taxon>
    </lineage>
</organism>
<protein>
    <recommendedName>
        <fullName>UDP-N-acetylglucosamine transferase subunit ALG13</fullName>
        <ecNumber>2.4.1.141</ecNumber>
    </recommendedName>
    <alternativeName>
        <fullName>Asparagine-linked glycosylation protein 13</fullName>
    </alternativeName>
</protein>
<evidence type="ECO:0000269" key="1">
    <source>
    </source>
</evidence>
<evidence type="ECO:0000269" key="2">
    <source>
    </source>
</evidence>
<evidence type="ECO:0000269" key="3">
    <source>
    </source>
</evidence>
<evidence type="ECO:0000269" key="4">
    <source>
    </source>
</evidence>
<evidence type="ECO:0000305" key="5"/>
<evidence type="ECO:0007829" key="6">
    <source>
        <dbReference type="PDB" id="2JZC"/>
    </source>
</evidence>
<evidence type="ECO:0007829" key="7">
    <source>
        <dbReference type="PDB" id="2KS6"/>
    </source>
</evidence>
<sequence>MGIIEEKALFVTCGATVPFPKLVSCVLSDEFCQELIQYGFVRLIIQFGRNYSSEFEHLVQERGGQRESQKIPIDQFGCGDTARQYVLMNGKLKVIGFDFSTKMQSIIRDYSDLVISHAGTGSILDSLRLNKPLIVCVNDSLMDNHQQQIADKFVELGYVWSCAPTETGLIAGLRASQTEKLKPFPVSHNPSFERLLVETIYS</sequence>
<reference key="1">
    <citation type="journal article" date="1997" name="Yeast">
        <title>The characterization of two new clusters of duplicated genes suggests a 'Lego' organization of the yeast Saccharomyces cerevisiae chromosomes.</title>
        <authorList>
            <person name="Feuermann M."/>
            <person name="de Montigny J."/>
            <person name="Potier S."/>
            <person name="Souciet J.-L."/>
        </authorList>
    </citation>
    <scope>NUCLEOTIDE SEQUENCE [GENOMIC DNA]</scope>
    <source>
        <strain>ATCC 204508 / S288c</strain>
    </source>
</reference>
<reference key="2">
    <citation type="journal article" date="1997" name="Nature">
        <title>The nucleotide sequence of Saccharomyces cerevisiae chromosome VII.</title>
        <authorList>
            <person name="Tettelin H."/>
            <person name="Agostoni-Carbone M.L."/>
            <person name="Albermann K."/>
            <person name="Albers M."/>
            <person name="Arroyo J."/>
            <person name="Backes U."/>
            <person name="Barreiros T."/>
            <person name="Bertani I."/>
            <person name="Bjourson A.J."/>
            <person name="Brueckner M."/>
            <person name="Bruschi C.V."/>
            <person name="Carignani G."/>
            <person name="Castagnoli L."/>
            <person name="Cerdan E."/>
            <person name="Clemente M.L."/>
            <person name="Coblenz A."/>
            <person name="Coglievina M."/>
            <person name="Coissac E."/>
            <person name="Defoor E."/>
            <person name="Del Bino S."/>
            <person name="Delius H."/>
            <person name="Delneri D."/>
            <person name="de Wergifosse P."/>
            <person name="Dujon B."/>
            <person name="Durand P."/>
            <person name="Entian K.-D."/>
            <person name="Eraso P."/>
            <person name="Escribano V."/>
            <person name="Fabiani L."/>
            <person name="Fartmann B."/>
            <person name="Feroli F."/>
            <person name="Feuermann M."/>
            <person name="Frontali L."/>
            <person name="Garcia-Gonzalez M."/>
            <person name="Garcia-Saez M.I."/>
            <person name="Goffeau A."/>
            <person name="Guerreiro P."/>
            <person name="Hani J."/>
            <person name="Hansen M."/>
            <person name="Hebling U."/>
            <person name="Hernandez K."/>
            <person name="Heumann K."/>
            <person name="Hilger F."/>
            <person name="Hofmann B."/>
            <person name="Indge K.J."/>
            <person name="James C.M."/>
            <person name="Klima R."/>
            <person name="Koetter P."/>
            <person name="Kramer B."/>
            <person name="Kramer W."/>
            <person name="Lauquin G."/>
            <person name="Leuther H."/>
            <person name="Louis E.J."/>
            <person name="Maillier E."/>
            <person name="Marconi A."/>
            <person name="Martegani E."/>
            <person name="Mazon M.J."/>
            <person name="Mazzoni C."/>
            <person name="McReynolds A.D.K."/>
            <person name="Melchioretto P."/>
            <person name="Mewes H.-W."/>
            <person name="Minenkova O."/>
            <person name="Mueller-Auer S."/>
            <person name="Nawrocki A."/>
            <person name="Netter P."/>
            <person name="Neu R."/>
            <person name="Nombela C."/>
            <person name="Oliver S.G."/>
            <person name="Panzeri L."/>
            <person name="Paoluzi S."/>
            <person name="Plevani P."/>
            <person name="Portetelle D."/>
            <person name="Portillo F."/>
            <person name="Potier S."/>
            <person name="Purnelle B."/>
            <person name="Rieger M."/>
            <person name="Riles L."/>
            <person name="Rinaldi T."/>
            <person name="Robben J."/>
            <person name="Rodrigues-Pousada C."/>
            <person name="Rodriguez-Belmonte E."/>
            <person name="Rodriguez-Torres A.M."/>
            <person name="Rose M."/>
            <person name="Ruzzi M."/>
            <person name="Saliola M."/>
            <person name="Sanchez-Perez M."/>
            <person name="Schaefer B."/>
            <person name="Schaefer M."/>
            <person name="Scharfe M."/>
            <person name="Schmidheini T."/>
            <person name="Schreer A."/>
            <person name="Skala J."/>
            <person name="Souciet J.-L."/>
            <person name="Steensma H.Y."/>
            <person name="Talla E."/>
            <person name="Thierry A."/>
            <person name="Vandenbol M."/>
            <person name="van der Aart Q.J.M."/>
            <person name="Van Dyck L."/>
            <person name="Vanoni M."/>
            <person name="Verhasselt P."/>
            <person name="Voet M."/>
            <person name="Volckaert G."/>
            <person name="Wambutt R."/>
            <person name="Watson M.D."/>
            <person name="Weber N."/>
            <person name="Wedler E."/>
            <person name="Wedler H."/>
            <person name="Wipfli P."/>
            <person name="Wolf K."/>
            <person name="Wright L.F."/>
            <person name="Zaccaria P."/>
            <person name="Zimmermann M."/>
            <person name="Zollner A."/>
            <person name="Kleine K."/>
        </authorList>
    </citation>
    <scope>NUCLEOTIDE SEQUENCE [LARGE SCALE GENOMIC DNA]</scope>
    <source>
        <strain>ATCC 204508 / S288c</strain>
    </source>
</reference>
<reference key="3">
    <citation type="journal article" date="2014" name="G3 (Bethesda)">
        <title>The reference genome sequence of Saccharomyces cerevisiae: Then and now.</title>
        <authorList>
            <person name="Engel S.R."/>
            <person name="Dietrich F.S."/>
            <person name="Fisk D.G."/>
            <person name="Binkley G."/>
            <person name="Balakrishnan R."/>
            <person name="Costanzo M.C."/>
            <person name="Dwight S.S."/>
            <person name="Hitz B.C."/>
            <person name="Karra K."/>
            <person name="Nash R.S."/>
            <person name="Weng S."/>
            <person name="Wong E.D."/>
            <person name="Lloyd P."/>
            <person name="Skrzypek M.S."/>
            <person name="Miyasato S.R."/>
            <person name="Simison M."/>
            <person name="Cherry J.M."/>
        </authorList>
    </citation>
    <scope>GENOME REANNOTATION</scope>
    <source>
        <strain>ATCC 204508 / S288c</strain>
    </source>
</reference>
<reference key="4">
    <citation type="journal article" date="2003" name="Nature">
        <title>Global analysis of protein localization in budding yeast.</title>
        <authorList>
            <person name="Huh W.-K."/>
            <person name="Falvo J.V."/>
            <person name="Gerke L.C."/>
            <person name="Carroll A.S."/>
            <person name="Howson R.W."/>
            <person name="Weissman J.S."/>
            <person name="O'Shea E.K."/>
        </authorList>
    </citation>
    <scope>SUBCELLULAR LOCATION [LARGE SCALE ANALYSIS]</scope>
</reference>
<reference key="5">
    <citation type="journal article" date="2003" name="Nature">
        <title>Global analysis of protein expression in yeast.</title>
        <authorList>
            <person name="Ghaemmaghami S."/>
            <person name="Huh W.-K."/>
            <person name="Bower K."/>
            <person name="Howson R.W."/>
            <person name="Belle A."/>
            <person name="Dephoure N."/>
            <person name="O'Shea E.K."/>
            <person name="Weissman J.S."/>
        </authorList>
    </citation>
    <scope>LEVEL OF PROTEIN EXPRESSION [LARGE SCALE ANALYSIS]</scope>
</reference>
<reference key="6">
    <citation type="journal article" date="2005" name="J. Biol. Chem.">
        <title>Two proteins homologous to the N- and C-terminal domains of the bacterial glycosyltransferase Murg are required for the second step of dolichyl-linked oligosaccharide synthesis in Saccharomyces cerevisiae.</title>
        <authorList>
            <person name="Chantret I."/>
            <person name="Dancourt J."/>
            <person name="Barbat A."/>
            <person name="Moore S.E.H."/>
        </authorList>
    </citation>
    <scope>FUNCTION</scope>
</reference>
<reference key="7">
    <citation type="journal article" date="2005" name="J. Biol. Chem.">
        <title>Alg14 recruits Alg13 to the cytoplasmic face of the endoplasmic reticulum to form a novel bipartite UDP-N-acetylglucosamine transferase required for the second step of N-linked glycosylation.</title>
        <authorList>
            <person name="Gao X.-D."/>
            <person name="Tachikawa H."/>
            <person name="Sato T."/>
            <person name="Jigami Y."/>
            <person name="Dean N."/>
        </authorList>
    </citation>
    <scope>FUNCTION</scope>
    <scope>INTERACTION WITH ALG14</scope>
    <scope>SUBCELLULAR LOCATION</scope>
</reference>
<keyword id="KW-0002">3D-structure</keyword>
<keyword id="KW-0256">Endoplasmic reticulum</keyword>
<keyword id="KW-0328">Glycosyltransferase</keyword>
<keyword id="KW-1185">Reference proteome</keyword>
<keyword id="KW-0808">Transferase</keyword>
<proteinExistence type="evidence at protein level"/>
<feature type="chain" id="PRO_0000215605" description="UDP-N-acetylglucosamine transferase subunit ALG13">
    <location>
        <begin position="1"/>
        <end position="202"/>
    </location>
</feature>
<feature type="strand" evidence="6">
    <location>
        <begin position="9"/>
        <end position="12"/>
    </location>
</feature>
<feature type="strand" evidence="7">
    <location>
        <begin position="15"/>
        <end position="17"/>
    </location>
</feature>
<feature type="helix" evidence="6">
    <location>
        <begin position="20"/>
        <end position="26"/>
    </location>
</feature>
<feature type="helix" evidence="6">
    <location>
        <begin position="29"/>
        <end position="36"/>
    </location>
</feature>
<feature type="turn" evidence="6">
    <location>
        <begin position="37"/>
        <end position="39"/>
    </location>
</feature>
<feature type="strand" evidence="6">
    <location>
        <begin position="43"/>
        <end position="45"/>
    </location>
</feature>
<feature type="strand" evidence="6">
    <location>
        <begin position="49"/>
        <end position="51"/>
    </location>
</feature>
<feature type="helix" evidence="6">
    <location>
        <begin position="58"/>
        <end position="62"/>
    </location>
</feature>
<feature type="strand" evidence="7">
    <location>
        <begin position="65"/>
        <end position="68"/>
    </location>
</feature>
<feature type="turn" evidence="7">
    <location>
        <begin position="73"/>
        <end position="76"/>
    </location>
</feature>
<feature type="strand" evidence="6">
    <location>
        <begin position="83"/>
        <end position="87"/>
    </location>
</feature>
<feature type="turn" evidence="6">
    <location>
        <begin position="88"/>
        <end position="90"/>
    </location>
</feature>
<feature type="strand" evidence="6">
    <location>
        <begin position="91"/>
        <end position="96"/>
    </location>
</feature>
<feature type="strand" evidence="6">
    <location>
        <begin position="99"/>
        <end position="102"/>
    </location>
</feature>
<feature type="helix" evidence="6">
    <location>
        <begin position="103"/>
        <end position="110"/>
    </location>
</feature>
<feature type="strand" evidence="6">
    <location>
        <begin position="114"/>
        <end position="118"/>
    </location>
</feature>
<feature type="helix" evidence="6">
    <location>
        <begin position="120"/>
        <end position="128"/>
    </location>
</feature>
<feature type="strand" evidence="7">
    <location>
        <begin position="133"/>
        <end position="136"/>
    </location>
</feature>
<feature type="helix" evidence="6">
    <location>
        <begin position="145"/>
        <end position="156"/>
    </location>
</feature>
<feature type="strand" evidence="7">
    <location>
        <begin position="157"/>
        <end position="162"/>
    </location>
</feature>
<feature type="turn" evidence="6">
    <location>
        <begin position="166"/>
        <end position="168"/>
    </location>
</feature>
<feature type="helix" evidence="6">
    <location>
        <begin position="169"/>
        <end position="176"/>
    </location>
</feature>
<feature type="strand" evidence="6">
    <location>
        <begin position="187"/>
        <end position="189"/>
    </location>
</feature>
<feature type="helix" evidence="6">
    <location>
        <begin position="192"/>
        <end position="199"/>
    </location>
</feature>
<comment type="function">
    <text evidence="3 4">Involved in protein N-glycosylation. Essential for the second step of the dolichol-linked oligosaccharide pathway.</text>
</comment>
<comment type="catalytic activity">
    <reaction>
        <text>an N-acetyl-alpha-D-glucosaminyl-diphospho-di-trans,poly-cis-dolichol + UDP-N-acetyl-alpha-D-glucosamine = an N,N'-diacetylchitobiosyl-diphospho-di-trans,poly-cis-dolichol + UDP + H(+)</text>
        <dbReference type="Rhea" id="RHEA:23380"/>
        <dbReference type="Rhea" id="RHEA-COMP:19507"/>
        <dbReference type="Rhea" id="RHEA-COMP:19510"/>
        <dbReference type="ChEBI" id="CHEBI:15378"/>
        <dbReference type="ChEBI" id="CHEBI:57269"/>
        <dbReference type="ChEBI" id="CHEBI:57705"/>
        <dbReference type="ChEBI" id="CHEBI:58223"/>
        <dbReference type="ChEBI" id="CHEBI:58427"/>
        <dbReference type="EC" id="2.4.1.141"/>
    </reaction>
</comment>
<comment type="subunit">
    <text>Heterodimer with ALG14 to form a functional enzyme.</text>
</comment>
<comment type="interaction">
    <interactant intactId="EBI-23770">
        <id>P53178</id>
    </interactant>
    <interactant intactId="EBI-23770">
        <id>P53178</id>
        <label>ALG13</label>
    </interactant>
    <organismsDiffer>false</organismsDiffer>
    <experiments>3</experiments>
</comment>
<comment type="interaction">
    <interactant intactId="EBI-23770">
        <id>P53178</id>
    </interactant>
    <interactant intactId="EBI-21477">
        <id>P38242</id>
        <label>ALG14</label>
    </interactant>
    <organismsDiffer>false</organismsDiffer>
    <experiments>3</experiments>
</comment>
<comment type="subcellular location">
    <subcellularLocation>
        <location evidence="1 4">Endoplasmic reticulum</location>
    </subcellularLocation>
</comment>
<comment type="miscellaneous">
    <text evidence="2">Present with 1950 molecules/cell in log phase SD medium.</text>
</comment>
<comment type="similarity">
    <text evidence="5">Belongs to the glycosyltransferase 28 family.</text>
</comment>
<dbReference type="EC" id="2.4.1.141"/>
<dbReference type="EMBL" id="Z72569">
    <property type="protein sequence ID" value="CAA96749.1"/>
    <property type="molecule type" value="Genomic_DNA"/>
</dbReference>
<dbReference type="EMBL" id="BK006941">
    <property type="protein sequence ID" value="DAA08054.1"/>
    <property type="molecule type" value="Genomic_DNA"/>
</dbReference>
<dbReference type="PIR" id="S64051">
    <property type="entry name" value="S64051"/>
</dbReference>
<dbReference type="RefSeq" id="NP_011468.1">
    <property type="nucleotide sequence ID" value="NM_001180912.1"/>
</dbReference>
<dbReference type="PDB" id="2JZC">
    <property type="method" value="NMR"/>
    <property type="chains" value="A=2-202"/>
</dbReference>
<dbReference type="PDB" id="2KS6">
    <property type="method" value="NMR"/>
    <property type="chains" value="A=2-202"/>
</dbReference>
<dbReference type="PDBsum" id="2JZC"/>
<dbReference type="PDBsum" id="2KS6"/>
<dbReference type="BMRB" id="P53178"/>
<dbReference type="SMR" id="P53178"/>
<dbReference type="BioGRID" id="33201">
    <property type="interactions" value="98"/>
</dbReference>
<dbReference type="ComplexPortal" id="CPX-1643">
    <property type="entry name" value="UDP-N-acetylglucosamine transferase complex"/>
</dbReference>
<dbReference type="DIP" id="DIP-4726N"/>
<dbReference type="FunCoup" id="P53178">
    <property type="interactions" value="412"/>
</dbReference>
<dbReference type="IntAct" id="P53178">
    <property type="interactions" value="1"/>
</dbReference>
<dbReference type="STRING" id="4932.YGL047W"/>
<dbReference type="CAZy" id="GT1">
    <property type="family name" value="Glycosyltransferase Family 1"/>
</dbReference>
<dbReference type="iPTMnet" id="P53178"/>
<dbReference type="PaxDb" id="4932-YGL047W"/>
<dbReference type="PeptideAtlas" id="P53178"/>
<dbReference type="EnsemblFungi" id="YGL047W_mRNA">
    <property type="protein sequence ID" value="YGL047W"/>
    <property type="gene ID" value="YGL047W"/>
</dbReference>
<dbReference type="GeneID" id="852835"/>
<dbReference type="KEGG" id="sce:YGL047W"/>
<dbReference type="AGR" id="SGD:S000003015"/>
<dbReference type="SGD" id="S000003015">
    <property type="gene designation" value="ALG13"/>
</dbReference>
<dbReference type="VEuPathDB" id="FungiDB:YGL047W"/>
<dbReference type="eggNOG" id="KOG3349">
    <property type="taxonomic scope" value="Eukaryota"/>
</dbReference>
<dbReference type="GeneTree" id="ENSGT00510000047493"/>
<dbReference type="HOGENOM" id="CLU_085408_2_0_1"/>
<dbReference type="InParanoid" id="P53178"/>
<dbReference type="OMA" id="QYKFRPN"/>
<dbReference type="OrthoDB" id="20273at2759"/>
<dbReference type="BioCyc" id="MetaCyc:MONOMER3O-20"/>
<dbReference type="BioCyc" id="YEAST:MONOMER3O-20"/>
<dbReference type="BRENDA" id="2.4.1.141">
    <property type="organism ID" value="984"/>
</dbReference>
<dbReference type="BioGRID-ORCS" id="852835">
    <property type="hits" value="8 hits in 10 CRISPR screens"/>
</dbReference>
<dbReference type="EvolutionaryTrace" id="P53178"/>
<dbReference type="PRO" id="PR:P53178"/>
<dbReference type="Proteomes" id="UP000002311">
    <property type="component" value="Chromosome VII"/>
</dbReference>
<dbReference type="RNAct" id="P53178">
    <property type="molecule type" value="protein"/>
</dbReference>
<dbReference type="GO" id="GO:0005737">
    <property type="term" value="C:cytoplasm"/>
    <property type="evidence" value="ECO:0000314"/>
    <property type="project" value="SGD"/>
</dbReference>
<dbReference type="GO" id="GO:0098548">
    <property type="term" value="C:cytoplasmic side of Golgi membrane"/>
    <property type="evidence" value="ECO:0000314"/>
    <property type="project" value="ComplexPortal"/>
</dbReference>
<dbReference type="GO" id="GO:0005829">
    <property type="term" value="C:cytosol"/>
    <property type="evidence" value="ECO:0000314"/>
    <property type="project" value="SGD"/>
</dbReference>
<dbReference type="GO" id="GO:0005783">
    <property type="term" value="C:endoplasmic reticulum"/>
    <property type="evidence" value="ECO:0007005"/>
    <property type="project" value="SGD"/>
</dbReference>
<dbReference type="GO" id="GO:0005634">
    <property type="term" value="C:nucleus"/>
    <property type="evidence" value="ECO:0007005"/>
    <property type="project" value="SGD"/>
</dbReference>
<dbReference type="GO" id="GO:0043541">
    <property type="term" value="C:UDP-N-acetylglucosamine transferase complex"/>
    <property type="evidence" value="ECO:0000353"/>
    <property type="project" value="ComplexPortal"/>
</dbReference>
<dbReference type="GO" id="GO:0042802">
    <property type="term" value="F:identical protein binding"/>
    <property type="evidence" value="ECO:0000353"/>
    <property type="project" value="IntAct"/>
</dbReference>
<dbReference type="GO" id="GO:0004577">
    <property type="term" value="F:N-acetylglucosaminyldiphosphodolichol N-acetylglucosaminyltransferase activity"/>
    <property type="evidence" value="ECO:0007669"/>
    <property type="project" value="UniProtKB-EC"/>
</dbReference>
<dbReference type="GO" id="GO:0006488">
    <property type="term" value="P:dolichol-linked oligosaccharide biosynthetic process"/>
    <property type="evidence" value="ECO:0000314"/>
    <property type="project" value="ComplexPortal"/>
</dbReference>
<dbReference type="FunFam" id="3.40.50.2000:FF:000244">
    <property type="entry name" value="UDP-N-acetylglucosamine transferase subunit ALG13"/>
    <property type="match status" value="1"/>
</dbReference>
<dbReference type="Gene3D" id="3.40.50.2000">
    <property type="entry name" value="Glycogen Phosphorylase B"/>
    <property type="match status" value="1"/>
</dbReference>
<dbReference type="InterPro" id="IPR007235">
    <property type="entry name" value="Glyco_trans_28_C"/>
</dbReference>
<dbReference type="InterPro" id="IPR052474">
    <property type="entry name" value="UDP-GlcNAc_transferase"/>
</dbReference>
<dbReference type="PANTHER" id="PTHR47043">
    <property type="entry name" value="UDP-N-ACETYLGLUCOSAMINE TRANSFERASE SUBUNIT ALG13"/>
    <property type="match status" value="1"/>
</dbReference>
<dbReference type="PANTHER" id="PTHR47043:SF1">
    <property type="entry name" value="UDP-N-ACETYLGLUCOSAMINE TRANSFERASE SUBUNIT ALG13"/>
    <property type="match status" value="1"/>
</dbReference>
<dbReference type="Pfam" id="PF04101">
    <property type="entry name" value="Glyco_tran_28_C"/>
    <property type="match status" value="1"/>
</dbReference>
<dbReference type="SUPFAM" id="SSF53756">
    <property type="entry name" value="UDP-Glycosyltransferase/glycogen phosphorylase"/>
    <property type="match status" value="1"/>
</dbReference>
<name>ALG13_YEAST</name>
<gene>
    <name type="primary">ALG13</name>
    <name type="ordered locus">YGL047W</name>
</gene>
<accession>P53178</accession>
<accession>D6VU93</accession>